<sequence length="223" mass="24737">MKAIIPPENLTELLERANMMAGVSLAQIAANRGITVPKNLKRDKGWVGQLIEMELGATAGSKPEQDFLHLGVELKTIPINVQGKPLETTYVCVAPLSQIEGLTWENSLVCHKLQRVLWVPVEGERQISVGARRIGTPILWQPDPDELRLLQQDWEEIMELIALGKVEKLTARHGEVLQLRPKAANSRALTQSIAENGSLKMTNPRGFYLKTAFTAMILNKAFG</sequence>
<dbReference type="EMBL" id="CP000503">
    <property type="protein sequence ID" value="ABM25840.1"/>
    <property type="molecule type" value="Genomic_DNA"/>
</dbReference>
<dbReference type="RefSeq" id="WP_011790292.1">
    <property type="nucleotide sequence ID" value="NC_008750.1"/>
</dbReference>
<dbReference type="SMR" id="A1RME5"/>
<dbReference type="KEGG" id="shw:Sputw3181_3023"/>
<dbReference type="HOGENOM" id="CLU_086669_0_0_6"/>
<dbReference type="Proteomes" id="UP000002597">
    <property type="component" value="Chromosome"/>
</dbReference>
<dbReference type="GO" id="GO:0005737">
    <property type="term" value="C:cytoplasm"/>
    <property type="evidence" value="ECO:0007669"/>
    <property type="project" value="UniProtKB-SubCell"/>
</dbReference>
<dbReference type="GO" id="GO:0003677">
    <property type="term" value="F:DNA binding"/>
    <property type="evidence" value="ECO:0007669"/>
    <property type="project" value="InterPro"/>
</dbReference>
<dbReference type="GO" id="GO:0004519">
    <property type="term" value="F:endonuclease activity"/>
    <property type="evidence" value="ECO:0007669"/>
    <property type="project" value="UniProtKB-UniRule"/>
</dbReference>
<dbReference type="GO" id="GO:0006304">
    <property type="term" value="P:DNA modification"/>
    <property type="evidence" value="ECO:0007669"/>
    <property type="project" value="InterPro"/>
</dbReference>
<dbReference type="GO" id="GO:0006298">
    <property type="term" value="P:mismatch repair"/>
    <property type="evidence" value="ECO:0007669"/>
    <property type="project" value="UniProtKB-UniRule"/>
</dbReference>
<dbReference type="CDD" id="cd00583">
    <property type="entry name" value="MutH-like"/>
    <property type="match status" value="1"/>
</dbReference>
<dbReference type="Gene3D" id="3.40.600.10">
    <property type="entry name" value="DNA mismatch repair MutH/Restriction endonuclease, type II"/>
    <property type="match status" value="1"/>
</dbReference>
<dbReference type="HAMAP" id="MF_00759">
    <property type="entry name" value="MutH"/>
    <property type="match status" value="1"/>
</dbReference>
<dbReference type="InterPro" id="IPR004230">
    <property type="entry name" value="DNA_mismatch_repair_MutH"/>
</dbReference>
<dbReference type="InterPro" id="IPR011337">
    <property type="entry name" value="DNA_rep_MutH/RE_typeII_Sau3AI"/>
</dbReference>
<dbReference type="InterPro" id="IPR037057">
    <property type="entry name" value="DNA_rep_MutH/T2_RE_sf"/>
</dbReference>
<dbReference type="InterPro" id="IPR011335">
    <property type="entry name" value="Restrct_endonuc-II-like"/>
</dbReference>
<dbReference type="NCBIfam" id="TIGR02248">
    <property type="entry name" value="mutH_TIGR"/>
    <property type="match status" value="1"/>
</dbReference>
<dbReference type="NCBIfam" id="NF003458">
    <property type="entry name" value="PRK05070.1"/>
    <property type="match status" value="1"/>
</dbReference>
<dbReference type="Pfam" id="PF02976">
    <property type="entry name" value="MutH"/>
    <property type="match status" value="1"/>
</dbReference>
<dbReference type="SMART" id="SM00927">
    <property type="entry name" value="MutH"/>
    <property type="match status" value="1"/>
</dbReference>
<dbReference type="SUPFAM" id="SSF52980">
    <property type="entry name" value="Restriction endonuclease-like"/>
    <property type="match status" value="1"/>
</dbReference>
<accession>A1RME5</accession>
<comment type="function">
    <text evidence="1">Sequence-specific endonuclease that cleaves unmethylated GATC sequences. It is involved in DNA mismatch repair.</text>
</comment>
<comment type="subcellular location">
    <subcellularLocation>
        <location evidence="1">Cytoplasm</location>
    </subcellularLocation>
</comment>
<comment type="similarity">
    <text evidence="1">Belongs to the MutH family.</text>
</comment>
<organism>
    <name type="scientific">Shewanella sp. (strain W3-18-1)</name>
    <dbReference type="NCBI Taxonomy" id="351745"/>
    <lineage>
        <taxon>Bacteria</taxon>
        <taxon>Pseudomonadati</taxon>
        <taxon>Pseudomonadota</taxon>
        <taxon>Gammaproteobacteria</taxon>
        <taxon>Alteromonadales</taxon>
        <taxon>Shewanellaceae</taxon>
        <taxon>Shewanella</taxon>
    </lineage>
</organism>
<gene>
    <name evidence="1" type="primary">mutH</name>
    <name type="ordered locus">Sputw3181_3023</name>
</gene>
<keyword id="KW-0963">Cytoplasm</keyword>
<keyword id="KW-0227">DNA damage</keyword>
<keyword id="KW-0234">DNA repair</keyword>
<keyword id="KW-0255">Endonuclease</keyword>
<keyword id="KW-0378">Hydrolase</keyword>
<keyword id="KW-0540">Nuclease</keyword>
<name>MUTH_SHESW</name>
<evidence type="ECO:0000255" key="1">
    <source>
        <dbReference type="HAMAP-Rule" id="MF_00759"/>
    </source>
</evidence>
<feature type="chain" id="PRO_1000046712" description="DNA mismatch repair protein MutH">
    <location>
        <begin position="1"/>
        <end position="223"/>
    </location>
</feature>
<reference key="1">
    <citation type="submission" date="2006-12" db="EMBL/GenBank/DDBJ databases">
        <title>Complete sequence of Shewanella sp. W3-18-1.</title>
        <authorList>
            <consortium name="US DOE Joint Genome Institute"/>
            <person name="Copeland A."/>
            <person name="Lucas S."/>
            <person name="Lapidus A."/>
            <person name="Barry K."/>
            <person name="Detter J.C."/>
            <person name="Glavina del Rio T."/>
            <person name="Hammon N."/>
            <person name="Israni S."/>
            <person name="Dalin E."/>
            <person name="Tice H."/>
            <person name="Pitluck S."/>
            <person name="Chain P."/>
            <person name="Malfatti S."/>
            <person name="Shin M."/>
            <person name="Vergez L."/>
            <person name="Schmutz J."/>
            <person name="Larimer F."/>
            <person name="Land M."/>
            <person name="Hauser L."/>
            <person name="Kyrpides N."/>
            <person name="Lykidis A."/>
            <person name="Tiedje J."/>
            <person name="Richardson P."/>
        </authorList>
    </citation>
    <scope>NUCLEOTIDE SEQUENCE [LARGE SCALE GENOMIC DNA]</scope>
    <source>
        <strain>W3-18-1</strain>
    </source>
</reference>
<protein>
    <recommendedName>
        <fullName evidence="1">DNA mismatch repair protein MutH</fullName>
    </recommendedName>
    <alternativeName>
        <fullName evidence="1">Methyl-directed mismatch repair protein</fullName>
    </alternativeName>
</protein>
<proteinExistence type="inferred from homology"/>